<gene>
    <name evidence="1" type="primary">rmf</name>
    <name type="ordered locus">PMI0781</name>
</gene>
<accession>B4EVD2</accession>
<organism>
    <name type="scientific">Proteus mirabilis (strain HI4320)</name>
    <dbReference type="NCBI Taxonomy" id="529507"/>
    <lineage>
        <taxon>Bacteria</taxon>
        <taxon>Pseudomonadati</taxon>
        <taxon>Pseudomonadota</taxon>
        <taxon>Gammaproteobacteria</taxon>
        <taxon>Enterobacterales</taxon>
        <taxon>Morganellaceae</taxon>
        <taxon>Proteus</taxon>
    </lineage>
</organism>
<feature type="chain" id="PRO_0000416478" description="Ribosome modulation factor">
    <location>
        <begin position="1"/>
        <end position="56"/>
    </location>
</feature>
<dbReference type="EMBL" id="AM942759">
    <property type="protein sequence ID" value="CAR41786.1"/>
    <property type="molecule type" value="Genomic_DNA"/>
</dbReference>
<dbReference type="RefSeq" id="WP_004244679.1">
    <property type="nucleotide sequence ID" value="NC_010554.1"/>
</dbReference>
<dbReference type="SMR" id="B4EVD2"/>
<dbReference type="EnsemblBacteria" id="CAR41786">
    <property type="protein sequence ID" value="CAR41786"/>
    <property type="gene ID" value="PMI0781"/>
</dbReference>
<dbReference type="GeneID" id="6802802"/>
<dbReference type="KEGG" id="pmr:PMI0781"/>
<dbReference type="eggNOG" id="COG3130">
    <property type="taxonomic scope" value="Bacteria"/>
</dbReference>
<dbReference type="HOGENOM" id="CLU_203350_0_0_6"/>
<dbReference type="Proteomes" id="UP000008319">
    <property type="component" value="Chromosome"/>
</dbReference>
<dbReference type="GO" id="GO:0005737">
    <property type="term" value="C:cytoplasm"/>
    <property type="evidence" value="ECO:0007669"/>
    <property type="project" value="UniProtKB-SubCell"/>
</dbReference>
<dbReference type="GO" id="GO:0006417">
    <property type="term" value="P:regulation of translation"/>
    <property type="evidence" value="ECO:0007669"/>
    <property type="project" value="UniProtKB-UniRule"/>
</dbReference>
<dbReference type="Gene3D" id="1.10.10.620">
    <property type="entry name" value="ribosome modulation factor like domain"/>
    <property type="match status" value="1"/>
</dbReference>
<dbReference type="HAMAP" id="MF_00919">
    <property type="entry name" value="RMF"/>
    <property type="match status" value="1"/>
</dbReference>
<dbReference type="InterPro" id="IPR007040">
    <property type="entry name" value="Ribosome_modulation_factor"/>
</dbReference>
<dbReference type="InterPro" id="IPR023200">
    <property type="entry name" value="RMF_sf"/>
</dbReference>
<dbReference type="NCBIfam" id="NF011162">
    <property type="entry name" value="PRK14563.1"/>
    <property type="match status" value="1"/>
</dbReference>
<dbReference type="NCBIfam" id="NF041886">
    <property type="entry name" value="Rmf_CrpP_fam"/>
    <property type="match status" value="1"/>
</dbReference>
<dbReference type="Pfam" id="PF04957">
    <property type="entry name" value="RMF"/>
    <property type="match status" value="1"/>
</dbReference>
<sequence length="56" mass="6493">MKRQKRDRLARALSKGYQAGMQGRSKEQCPYFAIDARSHWLGGWRQAMEDRPGLAK</sequence>
<keyword id="KW-0963">Cytoplasm</keyword>
<keyword id="KW-1185">Reference proteome</keyword>
<keyword id="KW-0810">Translation regulation</keyword>
<proteinExistence type="inferred from homology"/>
<evidence type="ECO:0000255" key="1">
    <source>
        <dbReference type="HAMAP-Rule" id="MF_00919"/>
    </source>
</evidence>
<name>RMF_PROMH</name>
<protein>
    <recommendedName>
        <fullName evidence="1">Ribosome modulation factor</fullName>
        <shortName evidence="1">RMF</shortName>
    </recommendedName>
</protein>
<comment type="function">
    <text evidence="1">During stationary phase, converts 70S ribosomes to an inactive dimeric form (100S ribosomes).</text>
</comment>
<comment type="subcellular location">
    <subcellularLocation>
        <location evidence="1">Cytoplasm</location>
    </subcellularLocation>
</comment>
<comment type="similarity">
    <text evidence="1">Belongs to the ribosome modulation factor family.</text>
</comment>
<reference key="1">
    <citation type="journal article" date="2008" name="J. Bacteriol.">
        <title>Complete genome sequence of uropathogenic Proteus mirabilis, a master of both adherence and motility.</title>
        <authorList>
            <person name="Pearson M.M."/>
            <person name="Sebaihia M."/>
            <person name="Churcher C."/>
            <person name="Quail M.A."/>
            <person name="Seshasayee A.S."/>
            <person name="Luscombe N.M."/>
            <person name="Abdellah Z."/>
            <person name="Arrosmith C."/>
            <person name="Atkin B."/>
            <person name="Chillingworth T."/>
            <person name="Hauser H."/>
            <person name="Jagels K."/>
            <person name="Moule S."/>
            <person name="Mungall K."/>
            <person name="Norbertczak H."/>
            <person name="Rabbinowitsch E."/>
            <person name="Walker D."/>
            <person name="Whithead S."/>
            <person name="Thomson N.R."/>
            <person name="Rather P.N."/>
            <person name="Parkhill J."/>
            <person name="Mobley H.L.T."/>
        </authorList>
    </citation>
    <scope>NUCLEOTIDE SEQUENCE [LARGE SCALE GENOMIC DNA]</scope>
    <source>
        <strain>HI4320</strain>
    </source>
</reference>